<organism>
    <name type="scientific">Methanocaldococcus jannaschii (strain ATCC 43067 / DSM 2661 / JAL-1 / JCM 10045 / NBRC 100440)</name>
    <name type="common">Methanococcus jannaschii</name>
    <dbReference type="NCBI Taxonomy" id="243232"/>
    <lineage>
        <taxon>Archaea</taxon>
        <taxon>Methanobacteriati</taxon>
        <taxon>Methanobacteriota</taxon>
        <taxon>Methanomada group</taxon>
        <taxon>Methanococci</taxon>
        <taxon>Methanococcales</taxon>
        <taxon>Methanocaldococcaceae</taxon>
        <taxon>Methanocaldococcus</taxon>
    </lineage>
</organism>
<reference key="1">
    <citation type="journal article" date="1996" name="Science">
        <title>Complete genome sequence of the methanogenic archaeon, Methanococcus jannaschii.</title>
        <authorList>
            <person name="Bult C.J."/>
            <person name="White O."/>
            <person name="Olsen G.J."/>
            <person name="Zhou L."/>
            <person name="Fleischmann R.D."/>
            <person name="Sutton G.G."/>
            <person name="Blake J.A."/>
            <person name="FitzGerald L.M."/>
            <person name="Clayton R.A."/>
            <person name="Gocayne J.D."/>
            <person name="Kerlavage A.R."/>
            <person name="Dougherty B.A."/>
            <person name="Tomb J.-F."/>
            <person name="Adams M.D."/>
            <person name="Reich C.I."/>
            <person name="Overbeek R."/>
            <person name="Kirkness E.F."/>
            <person name="Weinstock K.G."/>
            <person name="Merrick J.M."/>
            <person name="Glodek A."/>
            <person name="Scott J.L."/>
            <person name="Geoghagen N.S.M."/>
            <person name="Weidman J.F."/>
            <person name="Fuhrmann J.L."/>
            <person name="Nguyen D."/>
            <person name="Utterback T.R."/>
            <person name="Kelley J.M."/>
            <person name="Peterson J.D."/>
            <person name="Sadow P.W."/>
            <person name="Hanna M.C."/>
            <person name="Cotton M.D."/>
            <person name="Roberts K.M."/>
            <person name="Hurst M.A."/>
            <person name="Kaine B.P."/>
            <person name="Borodovsky M."/>
            <person name="Klenk H.-P."/>
            <person name="Fraser C.M."/>
            <person name="Smith H.O."/>
            <person name="Woese C.R."/>
            <person name="Venter J.C."/>
        </authorList>
    </citation>
    <scope>NUCLEOTIDE SEQUENCE [LARGE SCALE GENOMIC DNA]</scope>
    <source>
        <strain>ATCC 43067 / DSM 2661 / JAL-1 / JCM 10045 / NBRC 100440</strain>
    </source>
</reference>
<feature type="chain" id="PRO_0000137348" description="Small ribosomal subunit protein eS6">
    <location>
        <begin position="1"/>
        <end position="131"/>
    </location>
</feature>
<feature type="region of interest" description="Disordered" evidence="2">
    <location>
        <begin position="76"/>
        <end position="95"/>
    </location>
</feature>
<feature type="compositionally biased region" description="Basic residues" evidence="2">
    <location>
        <begin position="81"/>
        <end position="93"/>
    </location>
</feature>
<dbReference type="EMBL" id="L77117">
    <property type="protein sequence ID" value="AAB99263.1"/>
    <property type="molecule type" value="Genomic_DNA"/>
</dbReference>
<dbReference type="PIR" id="C64457">
    <property type="entry name" value="C64457"/>
</dbReference>
<dbReference type="RefSeq" id="WP_010870773.1">
    <property type="nucleotide sequence ID" value="NC_000909.1"/>
</dbReference>
<dbReference type="SMR" id="P54067"/>
<dbReference type="FunCoup" id="P54067">
    <property type="interactions" value="135"/>
</dbReference>
<dbReference type="STRING" id="243232.MJ_1260"/>
<dbReference type="PaxDb" id="243232-MJ_1260"/>
<dbReference type="EnsemblBacteria" id="AAB99263">
    <property type="protein sequence ID" value="AAB99263"/>
    <property type="gene ID" value="MJ_1260"/>
</dbReference>
<dbReference type="GeneID" id="1452158"/>
<dbReference type="KEGG" id="mja:MJ_1260"/>
<dbReference type="eggNOG" id="arCOG01946">
    <property type="taxonomic scope" value="Archaea"/>
</dbReference>
<dbReference type="HOGENOM" id="CLU_109671_1_1_2"/>
<dbReference type="InParanoid" id="P54067"/>
<dbReference type="OrthoDB" id="7793at2157"/>
<dbReference type="PhylomeDB" id="P54067"/>
<dbReference type="Proteomes" id="UP000000805">
    <property type="component" value="Chromosome"/>
</dbReference>
<dbReference type="GO" id="GO:1990904">
    <property type="term" value="C:ribonucleoprotein complex"/>
    <property type="evidence" value="ECO:0007669"/>
    <property type="project" value="UniProtKB-KW"/>
</dbReference>
<dbReference type="GO" id="GO:0005840">
    <property type="term" value="C:ribosome"/>
    <property type="evidence" value="ECO:0007669"/>
    <property type="project" value="UniProtKB-KW"/>
</dbReference>
<dbReference type="GO" id="GO:0003735">
    <property type="term" value="F:structural constituent of ribosome"/>
    <property type="evidence" value="ECO:0007669"/>
    <property type="project" value="InterPro"/>
</dbReference>
<dbReference type="GO" id="GO:0006412">
    <property type="term" value="P:translation"/>
    <property type="evidence" value="ECO:0007669"/>
    <property type="project" value="UniProtKB-UniRule"/>
</dbReference>
<dbReference type="HAMAP" id="MF_00512">
    <property type="entry name" value="Ribosomal_eS6"/>
    <property type="match status" value="1"/>
</dbReference>
<dbReference type="InterPro" id="IPR001377">
    <property type="entry name" value="Ribosomal_eS6"/>
</dbReference>
<dbReference type="InterPro" id="IPR020924">
    <property type="entry name" value="Ribosomal_eS6_arc"/>
</dbReference>
<dbReference type="InterPro" id="IPR018282">
    <property type="entry name" value="Ribosomal_eS6_CS"/>
</dbReference>
<dbReference type="NCBIfam" id="NF003294">
    <property type="entry name" value="PRK04290.1-3"/>
    <property type="match status" value="1"/>
</dbReference>
<dbReference type="PANTHER" id="PTHR11502">
    <property type="entry name" value="40S RIBOSOMAL PROTEIN S6"/>
    <property type="match status" value="1"/>
</dbReference>
<dbReference type="Pfam" id="PF01092">
    <property type="entry name" value="Ribosomal_S6e"/>
    <property type="match status" value="1"/>
</dbReference>
<dbReference type="SMART" id="SM01405">
    <property type="entry name" value="Ribosomal_S6e"/>
    <property type="match status" value="1"/>
</dbReference>
<dbReference type="PROSITE" id="PS00578">
    <property type="entry name" value="RIBOSOMAL_S6E"/>
    <property type="match status" value="1"/>
</dbReference>
<keyword id="KW-1185">Reference proteome</keyword>
<keyword id="KW-0687">Ribonucleoprotein</keyword>
<keyword id="KW-0689">Ribosomal protein</keyword>
<proteinExistence type="inferred from homology"/>
<gene>
    <name evidence="1" type="primary">rps6e</name>
    <name type="ordered locus">MJ1260</name>
</gene>
<sequence length="131" mass="14372">MPTAKFVVADPKTGRCYQIEADNTPLVGKKIGEVFDGKIIGLEGYKLQIRGGTDSSGFPMRPDIHGSRKVRVLLSAPPGFKPKRKGERRRKTVRGNTIAPDIVQINVKVVEYGEKSIPELLGLEGGENQEQ</sequence>
<evidence type="ECO:0000255" key="1">
    <source>
        <dbReference type="HAMAP-Rule" id="MF_00512"/>
    </source>
</evidence>
<evidence type="ECO:0000256" key="2">
    <source>
        <dbReference type="SAM" id="MobiDB-lite"/>
    </source>
</evidence>
<evidence type="ECO:0000305" key="3"/>
<protein>
    <recommendedName>
        <fullName evidence="1">Small ribosomal subunit protein eS6</fullName>
    </recommendedName>
    <alternativeName>
        <fullName evidence="3">30S ribosomal protein S6e</fullName>
    </alternativeName>
</protein>
<comment type="similarity">
    <text evidence="1">Belongs to the eukaryotic ribosomal protein eS6 family.</text>
</comment>
<accession>P54067</accession>
<name>RS6E_METJA</name>